<comment type="function">
    <text evidence="1">Cell surface receptor for PLXNB1, PLXNB2, PLXNB3 and PLXND1 that plays an important role in cell-cell signaling (By similarity). Regulates glutamatergic and GABAergic synapse development (By similarity). Promotes the development of inhibitory synapses in a PLXNB1-dependent manner and promotes the development of excitatory synapses in a PLXNB2-dependent manner (By similarity). Plays a role in priming antigen-specific T-cells, promotes differentiation of Th1 T-helper cells, and thereby contributes to adaptive immunity (By similarity). Promotes phosphorylation of TIMD2 (By similarity). Inhibits angiogenesis (By similarity). Promotes axon growth cone collapse (By similarity). Inhibits axonal extension by providing local signals to specify territories inaccessible for growing axons (By similarity).</text>
</comment>
<comment type="subunit">
    <text evidence="1">Interacts with PLXNB1, PLXNB2, PLXNB3, PLXND1 and TIMD2 (By similarity).</text>
</comment>
<comment type="subcellular location">
    <subcellularLocation>
        <location evidence="1">Cell membrane</location>
        <topology evidence="2">Single-pass type I membrane protein</topology>
    </subcellularLocation>
</comment>
<comment type="similarity">
    <text evidence="5">Belongs to the semaphorin family.</text>
</comment>
<sequence length="762" mass="83627">MALPALGLDSWSFLGLFLFQLLLLFLPPATTAGREGQGPTPRVKYHAGDGRRALSFFHQKGLQDFDTLLLSDDGGTLYVGAREAILALNIEDPGVPRLKNMIPWPASDRKKSECAFKRKSNETQCFNFIRVLVSFNSTHLYACGTFAFSPACTFIELQDSRLLPISEDRVVEGKGQSPFDPTHKHTAVMADGMLYSGTMNNFLGSEPILLRTLGSQPVLKTDNFLRWLQPDASFVAAIPSTQVVYFFFEETASEFEFFEKLRISRVAQVCKNDVGGEKLLQKKWTTFLKAQLLCTQPEQLPFNVIRHAVLQADNSSTDPQVYAVFTSQWHVGGTRSSAVCAFSLKDIKSVFEGKYKELDKETSRWTTYEYPDISPRPGSCSKGPSSDKALTFMKDHFLMDEPVVGTPLLVKSGVEYTWLAVETAQGIDGQSHLVMYLGTSTGSLHKAVVSGDHSAYLVEEIQLFPDPEPVRNLQLAPTQGAVFVGFSGGIWKVPRANCSVYESCMDCVLARDPHCAWDPESQTCRLLPTPILKSWKQDMQQGNPEWACASGPMGRSLGPRSRPQIIKEVLAVPNSILELPCPQSSALASYHWSHGVEAIPEAPSTVYNGSLLLLLRDGAGGLYQCWATENDFSYPVVSYWVHSQDQPLALDPKLAGIPRERMEAPLTRVGGGAALAAPKSYWPHFLTVTVLLALVLSGALVTFLVSPLGALRARGKVQGCGTLPSREKAPLSSEQCLQPSKEGRTSASDMDADNNLQGTEVA</sequence>
<proteinExistence type="evidence at transcript level"/>
<accession>Q5EA85</accession>
<name>SEM4A_BOVIN</name>
<dbReference type="EMBL" id="BT020684">
    <property type="protein sequence ID" value="AAX08701.1"/>
    <property type="molecule type" value="mRNA"/>
</dbReference>
<dbReference type="RefSeq" id="NP_001068908.1">
    <property type="nucleotide sequence ID" value="NM_001075440.1"/>
</dbReference>
<dbReference type="SMR" id="Q5EA85"/>
<dbReference type="FunCoup" id="Q5EA85">
    <property type="interactions" value="182"/>
</dbReference>
<dbReference type="STRING" id="9913.ENSBTAP00000016223"/>
<dbReference type="GlyCosmos" id="Q5EA85">
    <property type="glycosylation" value="5 sites, No reported glycans"/>
</dbReference>
<dbReference type="GlyGen" id="Q5EA85">
    <property type="glycosylation" value="5 sites"/>
</dbReference>
<dbReference type="PaxDb" id="9913-ENSBTAP00000016223"/>
<dbReference type="GeneID" id="510239"/>
<dbReference type="KEGG" id="bta:510239"/>
<dbReference type="CTD" id="64218"/>
<dbReference type="eggNOG" id="KOG3611">
    <property type="taxonomic scope" value="Eukaryota"/>
</dbReference>
<dbReference type="InParanoid" id="Q5EA85"/>
<dbReference type="OrthoDB" id="9988752at2759"/>
<dbReference type="Proteomes" id="UP000009136">
    <property type="component" value="Unplaced"/>
</dbReference>
<dbReference type="GO" id="GO:0005886">
    <property type="term" value="C:plasma membrane"/>
    <property type="evidence" value="ECO:0000318"/>
    <property type="project" value="GO_Central"/>
</dbReference>
<dbReference type="GO" id="GO:0045499">
    <property type="term" value="F:chemorepellent activity"/>
    <property type="evidence" value="ECO:0000318"/>
    <property type="project" value="GO_Central"/>
</dbReference>
<dbReference type="GO" id="GO:0038191">
    <property type="term" value="F:neuropilin binding"/>
    <property type="evidence" value="ECO:0000318"/>
    <property type="project" value="GO_Central"/>
</dbReference>
<dbReference type="GO" id="GO:0030215">
    <property type="term" value="F:semaphorin receptor binding"/>
    <property type="evidence" value="ECO:0000318"/>
    <property type="project" value="GO_Central"/>
</dbReference>
<dbReference type="GO" id="GO:0002250">
    <property type="term" value="P:adaptive immune response"/>
    <property type="evidence" value="ECO:0007669"/>
    <property type="project" value="UniProtKB-KW"/>
</dbReference>
<dbReference type="GO" id="GO:0001525">
    <property type="term" value="P:angiogenesis"/>
    <property type="evidence" value="ECO:0007669"/>
    <property type="project" value="UniProtKB-KW"/>
</dbReference>
<dbReference type="GO" id="GO:0007411">
    <property type="term" value="P:axon guidance"/>
    <property type="evidence" value="ECO:0000318"/>
    <property type="project" value="GO_Central"/>
</dbReference>
<dbReference type="GO" id="GO:0050919">
    <property type="term" value="P:negative chemotaxis"/>
    <property type="evidence" value="ECO:0000318"/>
    <property type="project" value="GO_Central"/>
</dbReference>
<dbReference type="GO" id="GO:0001755">
    <property type="term" value="P:neural crest cell migration"/>
    <property type="evidence" value="ECO:0000318"/>
    <property type="project" value="GO_Central"/>
</dbReference>
<dbReference type="GO" id="GO:0030335">
    <property type="term" value="P:positive regulation of cell migration"/>
    <property type="evidence" value="ECO:0000318"/>
    <property type="project" value="GO_Central"/>
</dbReference>
<dbReference type="GO" id="GO:1904891">
    <property type="term" value="P:positive regulation of excitatory synapse assembly"/>
    <property type="evidence" value="ECO:0000250"/>
    <property type="project" value="UniProtKB"/>
</dbReference>
<dbReference type="GO" id="GO:1905704">
    <property type="term" value="P:positive regulation of inhibitory synapse assembly"/>
    <property type="evidence" value="ECO:0000250"/>
    <property type="project" value="UniProtKB"/>
</dbReference>
<dbReference type="GO" id="GO:0071526">
    <property type="term" value="P:semaphorin-plexin signaling pathway"/>
    <property type="evidence" value="ECO:0000318"/>
    <property type="project" value="GO_Central"/>
</dbReference>
<dbReference type="FunFam" id="3.30.1680.10:FF:000019">
    <property type="entry name" value="Semaphorin 4A"/>
    <property type="match status" value="1"/>
</dbReference>
<dbReference type="FunFam" id="2.130.10.10:FF:000257">
    <property type="entry name" value="semaphorin-4A isoform X2"/>
    <property type="match status" value="1"/>
</dbReference>
<dbReference type="Gene3D" id="2.60.40.10">
    <property type="entry name" value="Immunoglobulins"/>
    <property type="match status" value="1"/>
</dbReference>
<dbReference type="Gene3D" id="3.30.1680.10">
    <property type="entry name" value="ligand-binding face of the semaphorins, domain 2"/>
    <property type="match status" value="1"/>
</dbReference>
<dbReference type="Gene3D" id="2.130.10.10">
    <property type="entry name" value="YVTN repeat-like/Quinoprotein amine dehydrogenase"/>
    <property type="match status" value="1"/>
</dbReference>
<dbReference type="InterPro" id="IPR013783">
    <property type="entry name" value="Ig-like_fold"/>
</dbReference>
<dbReference type="InterPro" id="IPR002165">
    <property type="entry name" value="Plexin_repeat"/>
</dbReference>
<dbReference type="InterPro" id="IPR016201">
    <property type="entry name" value="PSI"/>
</dbReference>
<dbReference type="InterPro" id="IPR001627">
    <property type="entry name" value="Semap_dom"/>
</dbReference>
<dbReference type="InterPro" id="IPR036352">
    <property type="entry name" value="Semap_dom_sf"/>
</dbReference>
<dbReference type="InterPro" id="IPR027231">
    <property type="entry name" value="Semaphorin"/>
</dbReference>
<dbReference type="InterPro" id="IPR015943">
    <property type="entry name" value="WD40/YVTN_repeat-like_dom_sf"/>
</dbReference>
<dbReference type="PANTHER" id="PTHR11036">
    <property type="entry name" value="SEMAPHORIN"/>
    <property type="match status" value="1"/>
</dbReference>
<dbReference type="PANTHER" id="PTHR11036:SF15">
    <property type="entry name" value="SEMAPHORIN-4A"/>
    <property type="match status" value="1"/>
</dbReference>
<dbReference type="Pfam" id="PF01437">
    <property type="entry name" value="PSI"/>
    <property type="match status" value="1"/>
</dbReference>
<dbReference type="Pfam" id="PF01403">
    <property type="entry name" value="Sema"/>
    <property type="match status" value="1"/>
</dbReference>
<dbReference type="SMART" id="SM00423">
    <property type="entry name" value="PSI"/>
    <property type="match status" value="1"/>
</dbReference>
<dbReference type="SMART" id="SM00630">
    <property type="entry name" value="Sema"/>
    <property type="match status" value="1"/>
</dbReference>
<dbReference type="SUPFAM" id="SSF103575">
    <property type="entry name" value="Plexin repeat"/>
    <property type="match status" value="1"/>
</dbReference>
<dbReference type="SUPFAM" id="SSF101912">
    <property type="entry name" value="Sema domain"/>
    <property type="match status" value="1"/>
</dbReference>
<dbReference type="PROSITE" id="PS51004">
    <property type="entry name" value="SEMA"/>
    <property type="match status" value="1"/>
</dbReference>
<reference key="1">
    <citation type="journal article" date="2005" name="BMC Genomics">
        <title>Characterization of 954 bovine full-CDS cDNA sequences.</title>
        <authorList>
            <person name="Harhay G.P."/>
            <person name="Sonstegard T.S."/>
            <person name="Keele J.W."/>
            <person name="Heaton M.P."/>
            <person name="Clawson M.L."/>
            <person name="Snelling W.M."/>
            <person name="Wiedmann R.T."/>
            <person name="Van Tassell C.P."/>
            <person name="Smith T.P.L."/>
        </authorList>
    </citation>
    <scope>NUCLEOTIDE SEQUENCE [LARGE SCALE MRNA]</scope>
</reference>
<feature type="signal peptide" evidence="2">
    <location>
        <begin position="1"/>
        <end position="32"/>
    </location>
</feature>
<feature type="chain" id="PRO_0000239120" description="Semaphorin-4A">
    <location>
        <begin position="33"/>
        <end position="762"/>
    </location>
</feature>
<feature type="topological domain" description="Extracellular" evidence="2">
    <location>
        <begin position="33"/>
        <end position="684"/>
    </location>
</feature>
<feature type="transmembrane region" description="Helical" evidence="2">
    <location>
        <begin position="685"/>
        <end position="705"/>
    </location>
</feature>
<feature type="topological domain" description="Cytoplasmic" evidence="2">
    <location>
        <begin position="706"/>
        <end position="762"/>
    </location>
</feature>
<feature type="domain" description="Sema" evidence="3">
    <location>
        <begin position="37"/>
        <end position="495"/>
    </location>
</feature>
<feature type="domain" description="PSI">
    <location>
        <begin position="497"/>
        <end position="544"/>
    </location>
</feature>
<feature type="domain" description="Ig-like C2-type">
    <location>
        <begin position="574"/>
        <end position="632"/>
    </location>
</feature>
<feature type="region of interest" description="Disordered" evidence="4">
    <location>
        <begin position="722"/>
        <end position="762"/>
    </location>
</feature>
<feature type="glycosylation site" description="N-linked (GlcNAc...) asparagine" evidence="2">
    <location>
        <position position="121"/>
    </location>
</feature>
<feature type="glycosylation site" description="N-linked (GlcNAc...) asparagine" evidence="2">
    <location>
        <position position="136"/>
    </location>
</feature>
<feature type="glycosylation site" description="N-linked (GlcNAc...) asparagine" evidence="2">
    <location>
        <position position="314"/>
    </location>
</feature>
<feature type="glycosylation site" description="N-linked (GlcNAc...) asparagine" evidence="2">
    <location>
        <position position="497"/>
    </location>
</feature>
<feature type="glycosylation site" description="N-linked (GlcNAc...) asparagine" evidence="2">
    <location>
        <position position="608"/>
    </location>
</feature>
<feature type="disulfide bond" evidence="3">
    <location>
        <begin position="114"/>
        <end position="125"/>
    </location>
</feature>
<feature type="disulfide bond" evidence="3">
    <location>
        <begin position="143"/>
        <end position="152"/>
    </location>
</feature>
<feature type="disulfide bond" evidence="3">
    <location>
        <begin position="270"/>
        <end position="380"/>
    </location>
</feature>
<feature type="disulfide bond" evidence="3">
    <location>
        <begin position="294"/>
        <end position="340"/>
    </location>
</feature>
<feature type="disulfide bond" evidence="3">
    <location>
        <begin position="498"/>
        <end position="515"/>
    </location>
</feature>
<feature type="disulfide bond" evidence="3">
    <location>
        <begin position="507"/>
        <end position="524"/>
    </location>
</feature>
<protein>
    <recommendedName>
        <fullName>Semaphorin-4A</fullName>
    </recommendedName>
</protein>
<organism>
    <name type="scientific">Bos taurus</name>
    <name type="common">Bovine</name>
    <dbReference type="NCBI Taxonomy" id="9913"/>
    <lineage>
        <taxon>Eukaryota</taxon>
        <taxon>Metazoa</taxon>
        <taxon>Chordata</taxon>
        <taxon>Craniata</taxon>
        <taxon>Vertebrata</taxon>
        <taxon>Euteleostomi</taxon>
        <taxon>Mammalia</taxon>
        <taxon>Eutheria</taxon>
        <taxon>Laurasiatheria</taxon>
        <taxon>Artiodactyla</taxon>
        <taxon>Ruminantia</taxon>
        <taxon>Pecora</taxon>
        <taxon>Bovidae</taxon>
        <taxon>Bovinae</taxon>
        <taxon>Bos</taxon>
    </lineage>
</organism>
<keyword id="KW-1064">Adaptive immunity</keyword>
<keyword id="KW-0037">Angiogenesis</keyword>
<keyword id="KW-1003">Cell membrane</keyword>
<keyword id="KW-0217">Developmental protein</keyword>
<keyword id="KW-0221">Differentiation</keyword>
<keyword id="KW-1015">Disulfide bond</keyword>
<keyword id="KW-0325">Glycoprotein</keyword>
<keyword id="KW-0391">Immunity</keyword>
<keyword id="KW-0393">Immunoglobulin domain</keyword>
<keyword id="KW-0472">Membrane</keyword>
<keyword id="KW-0524">Neurogenesis</keyword>
<keyword id="KW-1185">Reference proteome</keyword>
<keyword id="KW-0732">Signal</keyword>
<keyword id="KW-0812">Transmembrane</keyword>
<keyword id="KW-1133">Transmembrane helix</keyword>
<gene>
    <name type="primary">SEMA4A</name>
</gene>
<evidence type="ECO:0000250" key="1">
    <source>
        <dbReference type="UniProtKB" id="Q62178"/>
    </source>
</evidence>
<evidence type="ECO:0000255" key="2"/>
<evidence type="ECO:0000255" key="3">
    <source>
        <dbReference type="PROSITE-ProRule" id="PRU00352"/>
    </source>
</evidence>
<evidence type="ECO:0000256" key="4">
    <source>
        <dbReference type="SAM" id="MobiDB-lite"/>
    </source>
</evidence>
<evidence type="ECO:0000305" key="5"/>